<keyword id="KW-0067">ATP-binding</keyword>
<keyword id="KW-0418">Kinase</keyword>
<keyword id="KW-0460">Magnesium</keyword>
<keyword id="KW-0479">Metal-binding</keyword>
<keyword id="KW-0547">Nucleotide-binding</keyword>
<keyword id="KW-0808">Transferase</keyword>
<feature type="chain" id="PRO_0000398206" description="Propionate kinase">
    <location>
        <begin position="1"/>
        <end position="402"/>
    </location>
</feature>
<feature type="active site" description="Proton donor/acceptor" evidence="1">
    <location>
        <position position="143"/>
    </location>
</feature>
<feature type="binding site" evidence="1">
    <location>
        <position position="11"/>
    </location>
    <ligand>
        <name>ATP</name>
        <dbReference type="ChEBI" id="CHEBI:30616"/>
    </ligand>
</feature>
<feature type="binding site" evidence="1">
    <location>
        <position position="11"/>
    </location>
    <ligand>
        <name>Mg(2+)</name>
        <dbReference type="ChEBI" id="CHEBI:18420"/>
    </ligand>
</feature>
<feature type="binding site" evidence="1">
    <location>
        <position position="18"/>
    </location>
    <ligand>
        <name>ATP</name>
        <dbReference type="ChEBI" id="CHEBI:30616"/>
    </ligand>
</feature>
<feature type="binding site" evidence="1">
    <location>
        <position position="86"/>
    </location>
    <ligand>
        <name>substrate</name>
    </ligand>
</feature>
<feature type="binding site" evidence="1">
    <location>
        <position position="175"/>
    </location>
    <ligand>
        <name>ATP</name>
        <dbReference type="ChEBI" id="CHEBI:30616"/>
    </ligand>
</feature>
<feature type="binding site" evidence="1">
    <location>
        <begin position="203"/>
        <end position="207"/>
    </location>
    <ligand>
        <name>ATP</name>
        <dbReference type="ChEBI" id="CHEBI:30616"/>
    </ligand>
</feature>
<feature type="binding site" evidence="1">
    <location>
        <begin position="278"/>
        <end position="280"/>
    </location>
    <ligand>
        <name>ATP</name>
        <dbReference type="ChEBI" id="CHEBI:30616"/>
    </ligand>
</feature>
<feature type="binding site" evidence="1">
    <location>
        <begin position="326"/>
        <end position="330"/>
    </location>
    <ligand>
        <name>ATP</name>
        <dbReference type="ChEBI" id="CHEBI:30616"/>
    </ligand>
</feature>
<feature type="site" description="Transition state stabilizer" evidence="1">
    <location>
        <position position="175"/>
    </location>
</feature>
<feature type="site" description="Transition state stabilizer" evidence="1">
    <location>
        <position position="236"/>
    </location>
</feature>
<evidence type="ECO:0000255" key="1">
    <source>
        <dbReference type="HAMAP-Rule" id="MF_01881"/>
    </source>
</evidence>
<name>TDCD_ENT38</name>
<proteinExistence type="inferred from homology"/>
<dbReference type="EC" id="2.7.2.15" evidence="1"/>
<dbReference type="EMBL" id="CP000653">
    <property type="protein sequence ID" value="ABP62220.1"/>
    <property type="molecule type" value="Genomic_DNA"/>
</dbReference>
<dbReference type="RefSeq" id="WP_015960546.1">
    <property type="nucleotide sequence ID" value="NC_009436.1"/>
</dbReference>
<dbReference type="SMR" id="A4WEU0"/>
<dbReference type="STRING" id="399742.Ent638_3562"/>
<dbReference type="KEGG" id="ent:Ent638_3562"/>
<dbReference type="eggNOG" id="COG0282">
    <property type="taxonomic scope" value="Bacteria"/>
</dbReference>
<dbReference type="HOGENOM" id="CLU_020352_0_1_6"/>
<dbReference type="OrthoDB" id="9802453at2"/>
<dbReference type="UniPathway" id="UPA00052">
    <property type="reaction ID" value="UER00510"/>
</dbReference>
<dbReference type="Proteomes" id="UP000000230">
    <property type="component" value="Chromosome"/>
</dbReference>
<dbReference type="GO" id="GO:0005829">
    <property type="term" value="C:cytosol"/>
    <property type="evidence" value="ECO:0007669"/>
    <property type="project" value="TreeGrafter"/>
</dbReference>
<dbReference type="GO" id="GO:0008776">
    <property type="term" value="F:acetate kinase activity"/>
    <property type="evidence" value="ECO:0007669"/>
    <property type="project" value="TreeGrafter"/>
</dbReference>
<dbReference type="GO" id="GO:0005524">
    <property type="term" value="F:ATP binding"/>
    <property type="evidence" value="ECO:0007669"/>
    <property type="project" value="UniProtKB-KW"/>
</dbReference>
<dbReference type="GO" id="GO:0046872">
    <property type="term" value="F:metal ion binding"/>
    <property type="evidence" value="ECO:0007669"/>
    <property type="project" value="UniProtKB-KW"/>
</dbReference>
<dbReference type="GO" id="GO:0008980">
    <property type="term" value="F:propionate kinase activity"/>
    <property type="evidence" value="ECO:0007669"/>
    <property type="project" value="UniProtKB-UniRule"/>
</dbReference>
<dbReference type="GO" id="GO:0006083">
    <property type="term" value="P:acetate metabolic process"/>
    <property type="evidence" value="ECO:0007669"/>
    <property type="project" value="TreeGrafter"/>
</dbReference>
<dbReference type="GO" id="GO:0070689">
    <property type="term" value="P:L-threonine catabolic process to propionate"/>
    <property type="evidence" value="ECO:0007669"/>
    <property type="project" value="UniProtKB-UniRule"/>
</dbReference>
<dbReference type="CDD" id="cd24010">
    <property type="entry name" value="ASKHA_NBD_AcK_PK"/>
    <property type="match status" value="1"/>
</dbReference>
<dbReference type="Gene3D" id="3.30.420.40">
    <property type="match status" value="2"/>
</dbReference>
<dbReference type="HAMAP" id="MF_00020">
    <property type="entry name" value="Acetate_kinase"/>
    <property type="match status" value="1"/>
</dbReference>
<dbReference type="HAMAP" id="MF_01881">
    <property type="entry name" value="Propion_kin_subfam1"/>
    <property type="match status" value="1"/>
</dbReference>
<dbReference type="InterPro" id="IPR004372">
    <property type="entry name" value="Ac/propionate_kinase"/>
</dbReference>
<dbReference type="InterPro" id="IPR000890">
    <property type="entry name" value="Aliphatic_acid_kin_short-chain"/>
</dbReference>
<dbReference type="InterPro" id="IPR023865">
    <property type="entry name" value="Aliphatic_acid_kinase_CS"/>
</dbReference>
<dbReference type="InterPro" id="IPR043129">
    <property type="entry name" value="ATPase_NBD"/>
</dbReference>
<dbReference type="InterPro" id="IPR024917">
    <property type="entry name" value="Propionate_kinase"/>
</dbReference>
<dbReference type="NCBIfam" id="TIGR00016">
    <property type="entry name" value="ackA"/>
    <property type="match status" value="1"/>
</dbReference>
<dbReference type="NCBIfam" id="NF009045">
    <property type="entry name" value="PRK12379.1"/>
    <property type="match status" value="1"/>
</dbReference>
<dbReference type="PANTHER" id="PTHR21060">
    <property type="entry name" value="ACETATE KINASE"/>
    <property type="match status" value="1"/>
</dbReference>
<dbReference type="PANTHER" id="PTHR21060:SF17">
    <property type="entry name" value="PROPIONATE KINASE"/>
    <property type="match status" value="1"/>
</dbReference>
<dbReference type="Pfam" id="PF00871">
    <property type="entry name" value="Acetate_kinase"/>
    <property type="match status" value="1"/>
</dbReference>
<dbReference type="PIRSF" id="PIRSF000722">
    <property type="entry name" value="Acetate_prop_kin"/>
    <property type="match status" value="1"/>
</dbReference>
<dbReference type="PRINTS" id="PR00471">
    <property type="entry name" value="ACETATEKNASE"/>
</dbReference>
<dbReference type="SUPFAM" id="SSF53067">
    <property type="entry name" value="Actin-like ATPase domain"/>
    <property type="match status" value="2"/>
</dbReference>
<dbReference type="PROSITE" id="PS01075">
    <property type="entry name" value="ACETATE_KINASE_1"/>
    <property type="match status" value="1"/>
</dbReference>
<dbReference type="PROSITE" id="PS01076">
    <property type="entry name" value="ACETATE_KINASE_2"/>
    <property type="match status" value="1"/>
</dbReference>
<accession>A4WEU0</accession>
<gene>
    <name evidence="1" type="primary">tdcD</name>
    <name type="ordered locus">Ent638_3562</name>
</gene>
<reference key="1">
    <citation type="journal article" date="2010" name="PLoS Genet.">
        <title>Genome sequence of the plant growth promoting endophytic bacterium Enterobacter sp. 638.</title>
        <authorList>
            <person name="Taghavi S."/>
            <person name="van der Lelie D."/>
            <person name="Hoffman A."/>
            <person name="Zhang Y.B."/>
            <person name="Walla M.D."/>
            <person name="Vangronsveld J."/>
            <person name="Newman L."/>
            <person name="Monchy S."/>
        </authorList>
    </citation>
    <scope>NUCLEOTIDE SEQUENCE [LARGE SCALE GENOMIC DNA]</scope>
    <source>
        <strain>638</strain>
    </source>
</reference>
<comment type="function">
    <text evidence="1">Catalyzes the conversion of propionyl phosphate and ADP to propionate and ATP.</text>
</comment>
<comment type="catalytic activity">
    <reaction evidence="1">
        <text>propanoate + ATP = propanoyl phosphate + ADP</text>
        <dbReference type="Rhea" id="RHEA:23148"/>
        <dbReference type="ChEBI" id="CHEBI:17272"/>
        <dbReference type="ChEBI" id="CHEBI:30616"/>
        <dbReference type="ChEBI" id="CHEBI:58933"/>
        <dbReference type="ChEBI" id="CHEBI:456216"/>
        <dbReference type="EC" id="2.7.2.15"/>
    </reaction>
</comment>
<comment type="cofactor">
    <cofactor evidence="1">
        <name>Mg(2+)</name>
        <dbReference type="ChEBI" id="CHEBI:18420"/>
    </cofactor>
</comment>
<comment type="pathway">
    <text evidence="1">Amino-acid degradation; L-threonine degradation via propanoate pathway; propanoate from L-threonine: step 4/4.</text>
</comment>
<comment type="subunit">
    <text evidence="1">Homodimer.</text>
</comment>
<comment type="similarity">
    <text evidence="1">Belongs to the acetokinase family. TdcD subfamily.</text>
</comment>
<sequence length="402" mass="43001">MIEFPVVLVINCGSSSVKFSVLDAASCEALITGIADGVNTENAFISVNGGEPAPLARKDYEGALAAIALELEARDLMGSVALIGHRIAHGGSVFSESTPITDEVIDQIREISPLAPLHNYANLSGVEAAKHLFPGVQQVAVFDTSFHQTLAPQAYLYGLPYRYFEELGVRRYGFHGTSHRYVAQQAYSLLDIPQQDSGLVIAHLGNGASICAVRNGESVDTSMGMTPLEGLVMGTRCGDVDFGAMAWIAQQTGQTLDDLERVVNKESGLLGISGLSSDLRTLEKAWHDGHERARLAIETFVHRIARHIAGHAASLHRLDGVVFTGGIGENSKLIRQLVTDRLKVFGITLDPLKNALPGSAGERIITTDDSDVPCAVIPTNEEKMIALDAIRLGKVHPAAAYA</sequence>
<protein>
    <recommendedName>
        <fullName evidence="1">Propionate kinase</fullName>
        <ecNumber evidence="1">2.7.2.15</ecNumber>
    </recommendedName>
</protein>
<organism>
    <name type="scientific">Enterobacter sp. (strain 638)</name>
    <dbReference type="NCBI Taxonomy" id="399742"/>
    <lineage>
        <taxon>Bacteria</taxon>
        <taxon>Pseudomonadati</taxon>
        <taxon>Pseudomonadota</taxon>
        <taxon>Gammaproteobacteria</taxon>
        <taxon>Enterobacterales</taxon>
        <taxon>Enterobacteriaceae</taxon>
        <taxon>Enterobacter</taxon>
    </lineage>
</organism>